<name>PLPR2_RAT</name>
<evidence type="ECO:0000250" key="1">
    <source>
        <dbReference type="UniProtKB" id="Q6WAY2"/>
    </source>
</evidence>
<evidence type="ECO:0000250" key="2">
    <source>
        <dbReference type="UniProtKB" id="Q8VCY8"/>
    </source>
</evidence>
<evidence type="ECO:0000250" key="3">
    <source>
        <dbReference type="UniProtKB" id="Q96GM1"/>
    </source>
</evidence>
<evidence type="ECO:0000255" key="4"/>
<evidence type="ECO:0000256" key="5">
    <source>
        <dbReference type="SAM" id="MobiDB-lite"/>
    </source>
</evidence>
<evidence type="ECO:0000303" key="6">
    <source>
    </source>
</evidence>
<evidence type="ECO:0000305" key="7"/>
<evidence type="ECO:0000305" key="8">
    <source>
    </source>
</evidence>
<evidence type="ECO:0000312" key="9">
    <source>
        <dbReference type="RGD" id="1597171"/>
    </source>
</evidence>
<evidence type="ECO:0007744" key="10">
    <source>
    </source>
</evidence>
<protein>
    <recommendedName>
        <fullName evidence="3">Phospholipid phosphatase-related protein type 2</fullName>
    </recommendedName>
    <alternativeName>
        <fullName evidence="1">Inactive phospholipid phosphatase PLPPR2</fullName>
    </alternativeName>
    <alternativeName>
        <fullName evidence="3">Lipid phosphate phosphatase-related protein type 2</fullName>
    </alternativeName>
    <alternativeName>
        <fullName evidence="8">Plasticity-related gene 4 protein</fullName>
        <shortName evidence="6">PRG-4</shortName>
    </alternativeName>
</protein>
<proteinExistence type="evidence at protein level"/>
<gene>
    <name evidence="9" type="primary">Plppr2</name>
    <name evidence="3" type="synonym">Lppr2</name>
    <name evidence="2" type="synonym">Prg4</name>
</gene>
<dbReference type="EMBL" id="AY310911">
    <property type="protein sequence ID" value="AAQ76703.1"/>
    <property type="molecule type" value="mRNA"/>
</dbReference>
<dbReference type="FunCoup" id="Q6W5G4">
    <property type="interactions" value="795"/>
</dbReference>
<dbReference type="STRING" id="10116.ENSRNOP00000016790"/>
<dbReference type="GlyCosmos" id="Q6W5G4">
    <property type="glycosylation" value="1 site, No reported glycans"/>
</dbReference>
<dbReference type="GlyGen" id="Q6W5G4">
    <property type="glycosylation" value="1 site"/>
</dbReference>
<dbReference type="iPTMnet" id="Q6W5G4"/>
<dbReference type="PhosphoSitePlus" id="Q6W5G4"/>
<dbReference type="PaxDb" id="10116-ENSRNOP00000016790"/>
<dbReference type="UCSC" id="RGD:1597171">
    <property type="organism name" value="rat"/>
</dbReference>
<dbReference type="AGR" id="RGD:1597171"/>
<dbReference type="RGD" id="1597171">
    <property type="gene designation" value="Plppr2"/>
</dbReference>
<dbReference type="eggNOG" id="KOG3030">
    <property type="taxonomic scope" value="Eukaryota"/>
</dbReference>
<dbReference type="InParanoid" id="Q6W5G4"/>
<dbReference type="PhylomeDB" id="Q6W5G4"/>
<dbReference type="Reactome" id="R-RNO-419408">
    <property type="pathway name" value="Lysosphingolipid and LPA receptors"/>
</dbReference>
<dbReference type="PRO" id="PR:Q6W5G4"/>
<dbReference type="Proteomes" id="UP000002494">
    <property type="component" value="Unplaced"/>
</dbReference>
<dbReference type="GO" id="GO:0005886">
    <property type="term" value="C:plasma membrane"/>
    <property type="evidence" value="ECO:0000318"/>
    <property type="project" value="GO_Central"/>
</dbReference>
<dbReference type="GO" id="GO:0008195">
    <property type="term" value="F:phosphatidate phosphatase activity"/>
    <property type="evidence" value="ECO:0000318"/>
    <property type="project" value="GO_Central"/>
</dbReference>
<dbReference type="GO" id="GO:0046839">
    <property type="term" value="P:phospholipid dephosphorylation"/>
    <property type="evidence" value="ECO:0000318"/>
    <property type="project" value="GO_Central"/>
</dbReference>
<dbReference type="GO" id="GO:0006644">
    <property type="term" value="P:phospholipid metabolic process"/>
    <property type="evidence" value="ECO:0000318"/>
    <property type="project" value="GO_Central"/>
</dbReference>
<dbReference type="GO" id="GO:0007165">
    <property type="term" value="P:signal transduction"/>
    <property type="evidence" value="ECO:0000318"/>
    <property type="project" value="GO_Central"/>
</dbReference>
<dbReference type="CDD" id="cd03384">
    <property type="entry name" value="PAP2_wunen"/>
    <property type="match status" value="1"/>
</dbReference>
<dbReference type="FunFam" id="1.20.144.10:FF:000006">
    <property type="entry name" value="Phospholipid phosphatase-related protein type 2 isoform X1"/>
    <property type="match status" value="1"/>
</dbReference>
<dbReference type="Gene3D" id="1.20.144.10">
    <property type="entry name" value="Phosphatidic acid phosphatase type 2/haloperoxidase"/>
    <property type="match status" value="1"/>
</dbReference>
<dbReference type="InterPro" id="IPR036938">
    <property type="entry name" value="P_Acid_Pase_2/haloperoxi_sf"/>
</dbReference>
<dbReference type="InterPro" id="IPR000326">
    <property type="entry name" value="P_Acid_Pase_2/haloperoxidase"/>
</dbReference>
<dbReference type="InterPro" id="IPR043216">
    <property type="entry name" value="PA_PP_rel"/>
</dbReference>
<dbReference type="PANTHER" id="PTHR10165">
    <property type="entry name" value="LIPID PHOSPHATE PHOSPHATASE"/>
    <property type="match status" value="1"/>
</dbReference>
<dbReference type="PANTHER" id="PTHR10165:SF15">
    <property type="entry name" value="PHOSPHOLIPID PHOSPHATASE-RELATED PROTEIN TYPE 2"/>
    <property type="match status" value="1"/>
</dbReference>
<dbReference type="Pfam" id="PF01569">
    <property type="entry name" value="PAP2"/>
    <property type="match status" value="1"/>
</dbReference>
<dbReference type="SMART" id="SM00014">
    <property type="entry name" value="acidPPc"/>
    <property type="match status" value="1"/>
</dbReference>
<dbReference type="SUPFAM" id="SSF48317">
    <property type="entry name" value="Acid phosphatase/Vanadium-dependent haloperoxidase"/>
    <property type="match status" value="1"/>
</dbReference>
<comment type="subcellular location">
    <subcellularLocation>
        <location evidence="4">Membrane</location>
        <topology evidence="4">Multi-pass membrane protein</topology>
    </subcellularLocation>
</comment>
<comment type="similarity">
    <text evidence="7">Belongs to the PA-phosphatase related phosphoesterase family.</text>
</comment>
<comment type="caution">
    <text evidence="1">Has most probably no phospholipid phosphatase activity (By similarity). This is supported by the fact that the phosphatase sequence motifs as well as the His residue acting as a nucleophile in active phosphatases of the PA-phosphatase related phosphoesterase family are not conserved (By similarity).</text>
</comment>
<organism>
    <name type="scientific">Rattus norvegicus</name>
    <name type="common">Rat</name>
    <dbReference type="NCBI Taxonomy" id="10116"/>
    <lineage>
        <taxon>Eukaryota</taxon>
        <taxon>Metazoa</taxon>
        <taxon>Chordata</taxon>
        <taxon>Craniata</taxon>
        <taxon>Vertebrata</taxon>
        <taxon>Euteleostomi</taxon>
        <taxon>Mammalia</taxon>
        <taxon>Eutheria</taxon>
        <taxon>Euarchontoglires</taxon>
        <taxon>Glires</taxon>
        <taxon>Rodentia</taxon>
        <taxon>Myomorpha</taxon>
        <taxon>Muroidea</taxon>
        <taxon>Muridae</taxon>
        <taxon>Murinae</taxon>
        <taxon>Rattus</taxon>
    </lineage>
</organism>
<reference key="1">
    <citation type="journal article" date="2004" name="Eur. J. Neurosci.">
        <title>Molecular cloning and expression regulation of PRG-3, a new member of the plasticity-related gene family.</title>
        <authorList>
            <person name="Savaskan N.E."/>
            <person name="Brauer A.U."/>
            <person name="Nitsch R."/>
        </authorList>
    </citation>
    <scope>NUCLEOTIDE SEQUENCE [MRNA]</scope>
    <source>
        <tissue>Hippocampus</tissue>
    </source>
</reference>
<reference key="2">
    <citation type="journal article" date="2012" name="Nat. Commun.">
        <title>Quantitative maps of protein phosphorylation sites across 14 different rat organs and tissues.</title>
        <authorList>
            <person name="Lundby A."/>
            <person name="Secher A."/>
            <person name="Lage K."/>
            <person name="Nordsborg N.B."/>
            <person name="Dmytriyev A."/>
            <person name="Lundby C."/>
            <person name="Olsen J.V."/>
        </authorList>
    </citation>
    <scope>PHOSPHORYLATION [LARGE SCALE ANALYSIS] AT SER-312</scope>
    <scope>IDENTIFICATION BY MASS SPECTROMETRY [LARGE SCALE ANALYSIS]</scope>
</reference>
<feature type="chain" id="PRO_0000317540" description="Phospholipid phosphatase-related protein type 2">
    <location>
        <begin position="1"/>
        <end position="343"/>
    </location>
</feature>
<feature type="transmembrane region" description="Helical" evidence="4">
    <location>
        <begin position="12"/>
        <end position="32"/>
    </location>
</feature>
<feature type="transmembrane region" description="Helical" evidence="4">
    <location>
        <begin position="72"/>
        <end position="92"/>
    </location>
</feature>
<feature type="transmembrane region" description="Helical" evidence="4">
    <location>
        <begin position="129"/>
        <end position="149"/>
    </location>
</feature>
<feature type="transmembrane region" description="Helical" evidence="4">
    <location>
        <begin position="210"/>
        <end position="230"/>
    </location>
</feature>
<feature type="transmembrane region" description="Helical" evidence="4">
    <location>
        <begin position="239"/>
        <end position="259"/>
    </location>
</feature>
<feature type="transmembrane region" description="Helical" evidence="4">
    <location>
        <begin position="266"/>
        <end position="286"/>
    </location>
</feature>
<feature type="region of interest" description="Disordered" evidence="5">
    <location>
        <begin position="291"/>
        <end position="343"/>
    </location>
</feature>
<feature type="compositionally biased region" description="Basic residues" evidence="5">
    <location>
        <begin position="322"/>
        <end position="335"/>
    </location>
</feature>
<feature type="modified residue" description="Phosphoserine" evidence="2">
    <location>
        <position position="299"/>
    </location>
</feature>
<feature type="modified residue" description="Phosphoserine" evidence="10">
    <location>
        <position position="312"/>
    </location>
</feature>
<feature type="glycosylation site" description="N-linked (GlcNAc...) asparagine" evidence="4">
    <location>
        <position position="165"/>
    </location>
</feature>
<keyword id="KW-0325">Glycoprotein</keyword>
<keyword id="KW-0472">Membrane</keyword>
<keyword id="KW-0597">Phosphoprotein</keyword>
<keyword id="KW-1185">Reference proteome</keyword>
<keyword id="KW-0812">Transmembrane</keyword>
<keyword id="KW-1133">Transmembrane helix</keyword>
<accession>Q6W5G4</accession>
<sequence length="343" mass="36936">MAGGRPHLKRSFSIIPCFVFVESVLLGIVVLLAYRLEFTDTFPVHTQGFFCYDSAYAKPYPGPEAASRAPPALIYALVTAGPTLTILLGELARAFFPAPPSSSPVSGESTIVSGACCRFSPPLRRLVRFLGVYSFGLFTTTIFANAGQVVTGNPTPHFLSVCRPNYTALGCPPPSPDRPGPDRFVTDQSACAGSPSLVAAARRAFPCKDAALCAYAVTYTAMYVTLVFRVKGSRLVKPSLCLALLCPAFLVGVVRVAEYRNHWSDVLAGFLTGAAIATFLVTCVVHNFQSRPHSGRRLSPWEDLSQAPTMDSPLEKNPRPAGRIRHRHGSPHPSRRTVPAVAT</sequence>